<organism>
    <name type="scientific">Streptomyces virginiae</name>
    <name type="common">Streptomyces cinnamonensis</name>
    <dbReference type="NCBI Taxonomy" id="1961"/>
    <lineage>
        <taxon>Bacteria</taxon>
        <taxon>Bacillati</taxon>
        <taxon>Actinomycetota</taxon>
        <taxon>Actinomycetes</taxon>
        <taxon>Kitasatosporales</taxon>
        <taxon>Streptomycetaceae</taxon>
        <taxon>Streptomyces</taxon>
    </lineage>
</organism>
<gene>
    <name evidence="2" type="primary">rplL</name>
</gene>
<name>RL7_STRVG</name>
<reference key="1">
    <citation type="journal article" date="1996" name="Gene">
        <title>Gene organization in the ada-rplL region of Streptomyces virginiae.</title>
        <authorList>
            <person name="Katayama M."/>
            <person name="Sakai Y."/>
            <person name="Okamoto S."/>
            <person name="Ihara F."/>
            <person name="Nihira T."/>
            <person name="Yamada Y."/>
        </authorList>
    </citation>
    <scope>NUCLEOTIDE SEQUENCE [GENOMIC DNA]</scope>
</reference>
<feature type="initiator methionine" description="Removed" evidence="1">
    <location>
        <position position="1"/>
    </location>
</feature>
<feature type="chain" id="PRO_0000157594" description="Large ribosomal subunit protein bL12">
    <location>
        <begin position="2"/>
        <end position="127"/>
    </location>
</feature>
<evidence type="ECO:0000250" key="1"/>
<evidence type="ECO:0000255" key="2">
    <source>
        <dbReference type="HAMAP-Rule" id="MF_00368"/>
    </source>
</evidence>
<evidence type="ECO:0000305" key="3"/>
<dbReference type="EMBL" id="D50624">
    <property type="protein sequence ID" value="BAA09305.1"/>
    <property type="status" value="ALT_INIT"/>
    <property type="molecule type" value="Genomic_DNA"/>
</dbReference>
<dbReference type="RefSeq" id="WP_033225047.1">
    <property type="nucleotide sequence ID" value="NZ_CP107871.1"/>
</dbReference>
<dbReference type="SMR" id="P48936"/>
<dbReference type="eggNOG" id="COG0222">
    <property type="taxonomic scope" value="Bacteria"/>
</dbReference>
<dbReference type="GO" id="GO:0022625">
    <property type="term" value="C:cytosolic large ribosomal subunit"/>
    <property type="evidence" value="ECO:0007669"/>
    <property type="project" value="TreeGrafter"/>
</dbReference>
<dbReference type="GO" id="GO:0003729">
    <property type="term" value="F:mRNA binding"/>
    <property type="evidence" value="ECO:0007669"/>
    <property type="project" value="TreeGrafter"/>
</dbReference>
<dbReference type="GO" id="GO:0003735">
    <property type="term" value="F:structural constituent of ribosome"/>
    <property type="evidence" value="ECO:0007669"/>
    <property type="project" value="InterPro"/>
</dbReference>
<dbReference type="GO" id="GO:0006412">
    <property type="term" value="P:translation"/>
    <property type="evidence" value="ECO:0007669"/>
    <property type="project" value="UniProtKB-UniRule"/>
</dbReference>
<dbReference type="CDD" id="cd00387">
    <property type="entry name" value="Ribosomal_L7_L12"/>
    <property type="match status" value="1"/>
</dbReference>
<dbReference type="FunFam" id="1.20.5.710:FF:000005">
    <property type="entry name" value="50S ribosomal protein L7/L12"/>
    <property type="match status" value="1"/>
</dbReference>
<dbReference type="FunFam" id="3.30.1390.10:FF:000001">
    <property type="entry name" value="50S ribosomal protein L7/L12"/>
    <property type="match status" value="1"/>
</dbReference>
<dbReference type="Gene3D" id="3.30.1390.10">
    <property type="match status" value="1"/>
</dbReference>
<dbReference type="Gene3D" id="1.20.5.710">
    <property type="entry name" value="Single helix bin"/>
    <property type="match status" value="1"/>
</dbReference>
<dbReference type="HAMAP" id="MF_00368">
    <property type="entry name" value="Ribosomal_bL12"/>
    <property type="match status" value="1"/>
</dbReference>
<dbReference type="InterPro" id="IPR000206">
    <property type="entry name" value="Ribosomal_bL12"/>
</dbReference>
<dbReference type="InterPro" id="IPR013823">
    <property type="entry name" value="Ribosomal_bL12_C"/>
</dbReference>
<dbReference type="InterPro" id="IPR014719">
    <property type="entry name" value="Ribosomal_bL12_C/ClpS-like"/>
</dbReference>
<dbReference type="InterPro" id="IPR008932">
    <property type="entry name" value="Ribosomal_bL12_oligo"/>
</dbReference>
<dbReference type="InterPro" id="IPR036235">
    <property type="entry name" value="Ribosomal_bL12_oligo_N_sf"/>
</dbReference>
<dbReference type="NCBIfam" id="TIGR00855">
    <property type="entry name" value="L12"/>
    <property type="match status" value="1"/>
</dbReference>
<dbReference type="PANTHER" id="PTHR45987">
    <property type="entry name" value="39S RIBOSOMAL PROTEIN L12"/>
    <property type="match status" value="1"/>
</dbReference>
<dbReference type="PANTHER" id="PTHR45987:SF4">
    <property type="entry name" value="LARGE RIBOSOMAL SUBUNIT PROTEIN BL12M"/>
    <property type="match status" value="1"/>
</dbReference>
<dbReference type="Pfam" id="PF00542">
    <property type="entry name" value="Ribosomal_L12"/>
    <property type="match status" value="1"/>
</dbReference>
<dbReference type="Pfam" id="PF16320">
    <property type="entry name" value="Ribosomal_L12_N"/>
    <property type="match status" value="1"/>
</dbReference>
<dbReference type="SUPFAM" id="SSF54736">
    <property type="entry name" value="ClpS-like"/>
    <property type="match status" value="1"/>
</dbReference>
<dbReference type="SUPFAM" id="SSF48300">
    <property type="entry name" value="Ribosomal protein L7/12, oligomerisation (N-terminal) domain"/>
    <property type="match status" value="1"/>
</dbReference>
<sequence length="127" mass="13225">MAKLSQDDLLAQFEEMTLIELSEFVKAFEEKFDVTAAAAVAVAGPAGVGAAPEAAEEQDEFDVILTGAGDKKIQVIKVVRELTSLGLKEAKDLVDGAPKPVLEKVAKEAADKAAESLKAAGAAVEVK</sequence>
<protein>
    <recommendedName>
        <fullName evidence="2">Large ribosomal subunit protein bL12</fullName>
    </recommendedName>
    <alternativeName>
        <fullName evidence="3">50S ribosomal protein L7/L12</fullName>
        <shortName>SA1</shortName>
    </alternativeName>
</protein>
<proteinExistence type="inferred from homology"/>
<keyword id="KW-0687">Ribonucleoprotein</keyword>
<keyword id="KW-0689">Ribosomal protein</keyword>
<comment type="function">
    <text evidence="2">Forms part of the ribosomal stalk which helps the ribosome interact with GTP-bound translation factors. Is thus essential for accurate translation.</text>
</comment>
<comment type="subunit">
    <text evidence="2">Homodimer. Part of the ribosomal stalk of the 50S ribosomal subunit. Forms a multimeric L10(L12)X complex, where L10 forms an elongated spine to which 2 to 4 L12 dimers bind in a sequential fashion. Binds GTP-bound translation factors.</text>
</comment>
<comment type="similarity">
    <text evidence="2">Belongs to the bacterial ribosomal protein bL12 family.</text>
</comment>
<comment type="sequence caution" evidence="3">
    <conflict type="erroneous initiation">
        <sequence resource="EMBL-CDS" id="BAA09305"/>
    </conflict>
</comment>
<accession>P48936</accession>